<proteinExistence type="inferred from homology"/>
<protein>
    <recommendedName>
        <fullName evidence="1">Large ribosomal subunit protein uL14</fullName>
    </recommendedName>
    <alternativeName>
        <fullName evidence="2">50S ribosomal protein L14</fullName>
    </alternativeName>
</protein>
<sequence>MIQRESRLVVADNSGAKEVLVIGILGGTRRSHVNIGDIVVVTVKSGSGTVKKHDVLKAVIVRTKKGLRRKNGSYIKFDDNAVVLLKEDLNIIGTRIFGPVVRELSDKKFSKIVSLAQLVL</sequence>
<organism>
    <name type="scientific">Aster yellows witches'-broom phytoplasma (strain AYWB)</name>
    <dbReference type="NCBI Taxonomy" id="322098"/>
    <lineage>
        <taxon>Bacteria</taxon>
        <taxon>Bacillati</taxon>
        <taxon>Mycoplasmatota</taxon>
        <taxon>Mollicutes</taxon>
        <taxon>Acholeplasmatales</taxon>
        <taxon>Acholeplasmataceae</taxon>
        <taxon>Candidatus Phytoplasma</taxon>
        <taxon>16SrI (Aster yellows group)</taxon>
    </lineage>
</organism>
<keyword id="KW-0687">Ribonucleoprotein</keyword>
<keyword id="KW-0689">Ribosomal protein</keyword>
<keyword id="KW-0694">RNA-binding</keyword>
<keyword id="KW-0699">rRNA-binding</keyword>
<dbReference type="EMBL" id="CP000061">
    <property type="protein sequence ID" value="ABC65629.1"/>
    <property type="molecule type" value="Genomic_DNA"/>
</dbReference>
<dbReference type="RefSeq" id="WP_011412791.1">
    <property type="nucleotide sequence ID" value="NC_007716.1"/>
</dbReference>
<dbReference type="SMR" id="Q2NIW4"/>
<dbReference type="STRING" id="322098.AYWB_512"/>
<dbReference type="KEGG" id="ayw:AYWB_512"/>
<dbReference type="eggNOG" id="COG0093">
    <property type="taxonomic scope" value="Bacteria"/>
</dbReference>
<dbReference type="HOGENOM" id="CLU_095071_2_1_14"/>
<dbReference type="OrthoDB" id="9806379at2"/>
<dbReference type="PhylomeDB" id="Q2NIW4"/>
<dbReference type="Proteomes" id="UP000001934">
    <property type="component" value="Chromosome"/>
</dbReference>
<dbReference type="GO" id="GO:0022625">
    <property type="term" value="C:cytosolic large ribosomal subunit"/>
    <property type="evidence" value="ECO:0007669"/>
    <property type="project" value="TreeGrafter"/>
</dbReference>
<dbReference type="GO" id="GO:0070180">
    <property type="term" value="F:large ribosomal subunit rRNA binding"/>
    <property type="evidence" value="ECO:0007669"/>
    <property type="project" value="TreeGrafter"/>
</dbReference>
<dbReference type="GO" id="GO:0003735">
    <property type="term" value="F:structural constituent of ribosome"/>
    <property type="evidence" value="ECO:0007669"/>
    <property type="project" value="InterPro"/>
</dbReference>
<dbReference type="GO" id="GO:0006412">
    <property type="term" value="P:translation"/>
    <property type="evidence" value="ECO:0007669"/>
    <property type="project" value="UniProtKB-UniRule"/>
</dbReference>
<dbReference type="CDD" id="cd00337">
    <property type="entry name" value="Ribosomal_uL14"/>
    <property type="match status" value="1"/>
</dbReference>
<dbReference type="Gene3D" id="2.40.150.20">
    <property type="entry name" value="Ribosomal protein L14"/>
    <property type="match status" value="1"/>
</dbReference>
<dbReference type="HAMAP" id="MF_01367">
    <property type="entry name" value="Ribosomal_uL14"/>
    <property type="match status" value="1"/>
</dbReference>
<dbReference type="InterPro" id="IPR000218">
    <property type="entry name" value="Ribosomal_uL14"/>
</dbReference>
<dbReference type="InterPro" id="IPR005745">
    <property type="entry name" value="Ribosomal_uL14_bac-type"/>
</dbReference>
<dbReference type="InterPro" id="IPR019972">
    <property type="entry name" value="Ribosomal_uL14_CS"/>
</dbReference>
<dbReference type="InterPro" id="IPR036853">
    <property type="entry name" value="Ribosomal_uL14_sf"/>
</dbReference>
<dbReference type="NCBIfam" id="TIGR01067">
    <property type="entry name" value="rplN_bact"/>
    <property type="match status" value="1"/>
</dbReference>
<dbReference type="PANTHER" id="PTHR11761">
    <property type="entry name" value="50S/60S RIBOSOMAL PROTEIN L14/L23"/>
    <property type="match status" value="1"/>
</dbReference>
<dbReference type="PANTHER" id="PTHR11761:SF3">
    <property type="entry name" value="LARGE RIBOSOMAL SUBUNIT PROTEIN UL14M"/>
    <property type="match status" value="1"/>
</dbReference>
<dbReference type="Pfam" id="PF00238">
    <property type="entry name" value="Ribosomal_L14"/>
    <property type="match status" value="1"/>
</dbReference>
<dbReference type="SMART" id="SM01374">
    <property type="entry name" value="Ribosomal_L14"/>
    <property type="match status" value="1"/>
</dbReference>
<dbReference type="SUPFAM" id="SSF50193">
    <property type="entry name" value="Ribosomal protein L14"/>
    <property type="match status" value="1"/>
</dbReference>
<dbReference type="PROSITE" id="PS00049">
    <property type="entry name" value="RIBOSOMAL_L14"/>
    <property type="match status" value="1"/>
</dbReference>
<name>RL14_AYWBP</name>
<evidence type="ECO:0000255" key="1">
    <source>
        <dbReference type="HAMAP-Rule" id="MF_01367"/>
    </source>
</evidence>
<evidence type="ECO:0000305" key="2"/>
<reference key="1">
    <citation type="journal article" date="2006" name="J. Bacteriol.">
        <title>Living with genome instability: the adaptation of phytoplasmas to diverse environments of their insect and plant hosts.</title>
        <authorList>
            <person name="Bai X."/>
            <person name="Zhang J."/>
            <person name="Ewing A."/>
            <person name="Miller S.A."/>
            <person name="Jancso Radek A."/>
            <person name="Shevchenko D.V."/>
            <person name="Tsukerman K."/>
            <person name="Walunas T."/>
            <person name="Lapidus A."/>
            <person name="Campbell J.W."/>
            <person name="Hogenhout S.A."/>
        </authorList>
    </citation>
    <scope>NUCLEOTIDE SEQUENCE [LARGE SCALE GENOMIC DNA]</scope>
    <source>
        <strain>AYWB</strain>
    </source>
</reference>
<feature type="chain" id="PRO_0000355805" description="Large ribosomal subunit protein uL14">
    <location>
        <begin position="1"/>
        <end position="120"/>
    </location>
</feature>
<comment type="function">
    <text evidence="1">Binds to 23S rRNA. Forms part of two intersubunit bridges in the 70S ribosome.</text>
</comment>
<comment type="subunit">
    <text evidence="1">Part of the 50S ribosomal subunit. Forms a cluster with proteins L3 and L19. In the 70S ribosome, L14 and L19 interact and together make contacts with the 16S rRNA in bridges B5 and B8.</text>
</comment>
<comment type="similarity">
    <text evidence="1">Belongs to the universal ribosomal protein uL14 family.</text>
</comment>
<gene>
    <name evidence="1" type="primary">rplN</name>
    <name type="ordered locus">AYWB_512</name>
</gene>
<accession>Q2NIW4</accession>